<sequence>MIEASKLKAGMTFETADGKLIRVLEASHHKPGKGNTIMRMKLRDVRTGSTFDTSYRPEEKFEQAIIETVPAQYLYQMDDTAYFMNTETYDQYEIPVVNVEEELKFILENSDVKIQFYGTEVIGVTVPTTVELVVTDTQPSIKGATVTGSGKPATLETGLVVNVPDFIEVGQKLIINTAEGTYVSRA</sequence>
<name>EFP_STRSV</name>
<accession>A3CL43</accession>
<protein>
    <recommendedName>
        <fullName evidence="1">Elongation factor P</fullName>
        <shortName evidence="1">EF-P</shortName>
    </recommendedName>
</protein>
<comment type="function">
    <text evidence="1">Involved in peptide bond synthesis. Stimulates efficient translation and peptide-bond synthesis on native or reconstituted 70S ribosomes in vitro. Probably functions indirectly by altering the affinity of the ribosome for aminoacyl-tRNA, thus increasing their reactivity as acceptors for peptidyl transferase.</text>
</comment>
<comment type="pathway">
    <text evidence="1">Protein biosynthesis; polypeptide chain elongation.</text>
</comment>
<comment type="subcellular location">
    <subcellularLocation>
        <location evidence="1">Cytoplasm</location>
    </subcellularLocation>
</comment>
<comment type="similarity">
    <text evidence="1">Belongs to the elongation factor P family.</text>
</comment>
<proteinExistence type="inferred from homology"/>
<evidence type="ECO:0000255" key="1">
    <source>
        <dbReference type="HAMAP-Rule" id="MF_00141"/>
    </source>
</evidence>
<dbReference type="EMBL" id="CP000387">
    <property type="protein sequence ID" value="ABN43898.1"/>
    <property type="molecule type" value="Genomic_DNA"/>
</dbReference>
<dbReference type="RefSeq" id="WP_002896485.1">
    <property type="nucleotide sequence ID" value="NC_009009.1"/>
</dbReference>
<dbReference type="RefSeq" id="YP_001034448.1">
    <property type="nucleotide sequence ID" value="NC_009009.1"/>
</dbReference>
<dbReference type="SMR" id="A3CL43"/>
<dbReference type="STRING" id="388919.SSA_0450"/>
<dbReference type="GeneID" id="48426265"/>
<dbReference type="KEGG" id="ssa:SSA_0450"/>
<dbReference type="PATRIC" id="fig|388919.9.peg.434"/>
<dbReference type="eggNOG" id="COG0231">
    <property type="taxonomic scope" value="Bacteria"/>
</dbReference>
<dbReference type="HOGENOM" id="CLU_074944_3_0_9"/>
<dbReference type="OrthoDB" id="9801844at2"/>
<dbReference type="UniPathway" id="UPA00345"/>
<dbReference type="Proteomes" id="UP000002148">
    <property type="component" value="Chromosome"/>
</dbReference>
<dbReference type="GO" id="GO:0005737">
    <property type="term" value="C:cytoplasm"/>
    <property type="evidence" value="ECO:0007669"/>
    <property type="project" value="UniProtKB-SubCell"/>
</dbReference>
<dbReference type="GO" id="GO:0003746">
    <property type="term" value="F:translation elongation factor activity"/>
    <property type="evidence" value="ECO:0007669"/>
    <property type="project" value="UniProtKB-UniRule"/>
</dbReference>
<dbReference type="GO" id="GO:0043043">
    <property type="term" value="P:peptide biosynthetic process"/>
    <property type="evidence" value="ECO:0007669"/>
    <property type="project" value="InterPro"/>
</dbReference>
<dbReference type="CDD" id="cd04470">
    <property type="entry name" value="S1_EF-P_repeat_1"/>
    <property type="match status" value="1"/>
</dbReference>
<dbReference type="CDD" id="cd05794">
    <property type="entry name" value="S1_EF-P_repeat_2"/>
    <property type="match status" value="1"/>
</dbReference>
<dbReference type="FunFam" id="2.30.30.30:FF:000003">
    <property type="entry name" value="Elongation factor P"/>
    <property type="match status" value="1"/>
</dbReference>
<dbReference type="FunFam" id="2.40.50.140:FF:000004">
    <property type="entry name" value="Elongation factor P"/>
    <property type="match status" value="1"/>
</dbReference>
<dbReference type="FunFam" id="2.40.50.140:FF:000009">
    <property type="entry name" value="Elongation factor P"/>
    <property type="match status" value="1"/>
</dbReference>
<dbReference type="Gene3D" id="2.30.30.30">
    <property type="match status" value="1"/>
</dbReference>
<dbReference type="Gene3D" id="2.40.50.140">
    <property type="entry name" value="Nucleic acid-binding proteins"/>
    <property type="match status" value="2"/>
</dbReference>
<dbReference type="HAMAP" id="MF_00141">
    <property type="entry name" value="EF_P"/>
    <property type="match status" value="1"/>
</dbReference>
<dbReference type="InterPro" id="IPR015365">
    <property type="entry name" value="Elong-fact-P_C"/>
</dbReference>
<dbReference type="InterPro" id="IPR012340">
    <property type="entry name" value="NA-bd_OB-fold"/>
</dbReference>
<dbReference type="InterPro" id="IPR014722">
    <property type="entry name" value="Rib_uL2_dom2"/>
</dbReference>
<dbReference type="InterPro" id="IPR020599">
    <property type="entry name" value="Transl_elong_fac_P/YeiP"/>
</dbReference>
<dbReference type="InterPro" id="IPR013185">
    <property type="entry name" value="Transl_elong_KOW-like"/>
</dbReference>
<dbReference type="InterPro" id="IPR001059">
    <property type="entry name" value="Transl_elong_P/YeiP_cen"/>
</dbReference>
<dbReference type="InterPro" id="IPR013852">
    <property type="entry name" value="Transl_elong_P/YeiP_CS"/>
</dbReference>
<dbReference type="InterPro" id="IPR011768">
    <property type="entry name" value="Transl_elongation_fac_P"/>
</dbReference>
<dbReference type="InterPro" id="IPR008991">
    <property type="entry name" value="Translation_prot_SH3-like_sf"/>
</dbReference>
<dbReference type="NCBIfam" id="TIGR00038">
    <property type="entry name" value="efp"/>
    <property type="match status" value="1"/>
</dbReference>
<dbReference type="NCBIfam" id="NF001810">
    <property type="entry name" value="PRK00529.1"/>
    <property type="match status" value="1"/>
</dbReference>
<dbReference type="PANTHER" id="PTHR30053">
    <property type="entry name" value="ELONGATION FACTOR P"/>
    <property type="match status" value="1"/>
</dbReference>
<dbReference type="PANTHER" id="PTHR30053:SF12">
    <property type="entry name" value="ELONGATION FACTOR P (EF-P) FAMILY PROTEIN"/>
    <property type="match status" value="1"/>
</dbReference>
<dbReference type="Pfam" id="PF01132">
    <property type="entry name" value="EFP"/>
    <property type="match status" value="1"/>
</dbReference>
<dbReference type="Pfam" id="PF08207">
    <property type="entry name" value="EFP_N"/>
    <property type="match status" value="1"/>
</dbReference>
<dbReference type="Pfam" id="PF09285">
    <property type="entry name" value="Elong-fact-P_C"/>
    <property type="match status" value="1"/>
</dbReference>
<dbReference type="PIRSF" id="PIRSF005901">
    <property type="entry name" value="EF-P"/>
    <property type="match status" value="1"/>
</dbReference>
<dbReference type="SMART" id="SM01185">
    <property type="entry name" value="EFP"/>
    <property type="match status" value="1"/>
</dbReference>
<dbReference type="SMART" id="SM00841">
    <property type="entry name" value="Elong-fact-P_C"/>
    <property type="match status" value="1"/>
</dbReference>
<dbReference type="SUPFAM" id="SSF50249">
    <property type="entry name" value="Nucleic acid-binding proteins"/>
    <property type="match status" value="2"/>
</dbReference>
<dbReference type="SUPFAM" id="SSF50104">
    <property type="entry name" value="Translation proteins SH3-like domain"/>
    <property type="match status" value="1"/>
</dbReference>
<dbReference type="PROSITE" id="PS01275">
    <property type="entry name" value="EFP"/>
    <property type="match status" value="1"/>
</dbReference>
<organism>
    <name type="scientific">Streptococcus sanguinis (strain SK36)</name>
    <dbReference type="NCBI Taxonomy" id="388919"/>
    <lineage>
        <taxon>Bacteria</taxon>
        <taxon>Bacillati</taxon>
        <taxon>Bacillota</taxon>
        <taxon>Bacilli</taxon>
        <taxon>Lactobacillales</taxon>
        <taxon>Streptococcaceae</taxon>
        <taxon>Streptococcus</taxon>
    </lineage>
</organism>
<reference key="1">
    <citation type="journal article" date="2007" name="J. Bacteriol.">
        <title>Genome of the opportunistic pathogen Streptococcus sanguinis.</title>
        <authorList>
            <person name="Xu P."/>
            <person name="Alves J.M."/>
            <person name="Kitten T."/>
            <person name="Brown A."/>
            <person name="Chen Z."/>
            <person name="Ozaki L.S."/>
            <person name="Manque P."/>
            <person name="Ge X."/>
            <person name="Serrano M.G."/>
            <person name="Puiu D."/>
            <person name="Hendricks S."/>
            <person name="Wang Y."/>
            <person name="Chaplin M.D."/>
            <person name="Akan D."/>
            <person name="Paik S."/>
            <person name="Peterson D.L."/>
            <person name="Macrina F.L."/>
            <person name="Buck G.A."/>
        </authorList>
    </citation>
    <scope>NUCLEOTIDE SEQUENCE [LARGE SCALE GENOMIC DNA]</scope>
    <source>
        <strain>SK36</strain>
    </source>
</reference>
<keyword id="KW-0963">Cytoplasm</keyword>
<keyword id="KW-0251">Elongation factor</keyword>
<keyword id="KW-0648">Protein biosynthesis</keyword>
<keyword id="KW-1185">Reference proteome</keyword>
<gene>
    <name evidence="1" type="primary">efp</name>
    <name type="ordered locus">SSA_0450</name>
</gene>
<feature type="chain" id="PRO_1000010878" description="Elongation factor P">
    <location>
        <begin position="1"/>
        <end position="186"/>
    </location>
</feature>